<accession>P44338</accession>
<gene>
    <name evidence="1" type="primary">asnA</name>
    <name type="ordered locus">HI_0564</name>
</gene>
<name>ASNA_HAEIN</name>
<feature type="chain" id="PRO_0000195878" description="Aspartate--ammonia ligase">
    <location>
        <begin position="1"/>
        <end position="330"/>
    </location>
</feature>
<sequence length="330" mass="37432">MKKTFILQQQEISFVKNTFTQNLIEQLGIIEVQGPILSQVGNGMQDNLSGIEKAVQVNVKCIPNAVFEVVHSLAKWKRHTLARFNFKEDEGLFVHMKALRPDEDSLDPTHSVYVDQWDWEKVIPEGRRNFAYLKETVNSIYRAIRLTELAVEARFDIPSILPKQITFVHSEDLVKRYPDLSSKERENAICKEYGAVFLIGIGGKLSDGKPHDGRAPDYDDWTTESENGYKGLNGDILVWNDQLGKAFELSSMGIRVDESALRLQVGLTGDEDHLKMDWHQDLLNGKLPLTIGGGIGQSRLAMLLLRKKHIGEVQSSVWPKEMLEEFSNIL</sequence>
<evidence type="ECO:0000255" key="1">
    <source>
        <dbReference type="HAMAP-Rule" id="MF_00555"/>
    </source>
</evidence>
<protein>
    <recommendedName>
        <fullName evidence="1">Aspartate--ammonia ligase</fullName>
        <ecNumber evidence="1">6.3.1.1</ecNumber>
    </recommendedName>
    <alternativeName>
        <fullName evidence="1">Asparagine synthetase A</fullName>
    </alternativeName>
</protein>
<dbReference type="EC" id="6.3.1.1" evidence="1"/>
<dbReference type="EMBL" id="L42023">
    <property type="protein sequence ID" value="AAC22222.1"/>
    <property type="molecule type" value="Genomic_DNA"/>
</dbReference>
<dbReference type="PIR" id="H64077">
    <property type="entry name" value="H64077"/>
</dbReference>
<dbReference type="RefSeq" id="NP_438721.1">
    <property type="nucleotide sequence ID" value="NC_000907.1"/>
</dbReference>
<dbReference type="SMR" id="P44338"/>
<dbReference type="STRING" id="71421.HI_0564"/>
<dbReference type="EnsemblBacteria" id="AAC22222">
    <property type="protein sequence ID" value="AAC22222"/>
    <property type="gene ID" value="HI_0564"/>
</dbReference>
<dbReference type="KEGG" id="hin:HI_0564"/>
<dbReference type="PATRIC" id="fig|71421.8.peg.584"/>
<dbReference type="eggNOG" id="COG2502">
    <property type="taxonomic scope" value="Bacteria"/>
</dbReference>
<dbReference type="HOGENOM" id="CLU_071543_0_0_6"/>
<dbReference type="OrthoDB" id="3185462at2"/>
<dbReference type="PhylomeDB" id="P44338"/>
<dbReference type="BioCyc" id="HINF71421:G1GJ1-576-MONOMER"/>
<dbReference type="UniPathway" id="UPA00134">
    <property type="reaction ID" value="UER00194"/>
</dbReference>
<dbReference type="Proteomes" id="UP000000579">
    <property type="component" value="Chromosome"/>
</dbReference>
<dbReference type="GO" id="GO:0005829">
    <property type="term" value="C:cytosol"/>
    <property type="evidence" value="ECO:0000318"/>
    <property type="project" value="GO_Central"/>
</dbReference>
<dbReference type="GO" id="GO:0004071">
    <property type="term" value="F:aspartate-ammonia ligase activity"/>
    <property type="evidence" value="ECO:0000318"/>
    <property type="project" value="GO_Central"/>
</dbReference>
<dbReference type="GO" id="GO:0005524">
    <property type="term" value="F:ATP binding"/>
    <property type="evidence" value="ECO:0007669"/>
    <property type="project" value="UniProtKB-UniRule"/>
</dbReference>
<dbReference type="GO" id="GO:0006529">
    <property type="term" value="P:asparagine biosynthetic process"/>
    <property type="evidence" value="ECO:0000318"/>
    <property type="project" value="GO_Central"/>
</dbReference>
<dbReference type="GO" id="GO:0070981">
    <property type="term" value="P:L-asparagine biosynthetic process"/>
    <property type="evidence" value="ECO:0007669"/>
    <property type="project" value="UniProtKB-UniRule"/>
</dbReference>
<dbReference type="Gene3D" id="3.30.930.10">
    <property type="entry name" value="Bira Bifunctional Protein, Domain 2"/>
    <property type="match status" value="1"/>
</dbReference>
<dbReference type="HAMAP" id="MF_00555">
    <property type="entry name" value="AsnA"/>
    <property type="match status" value="1"/>
</dbReference>
<dbReference type="InterPro" id="IPR006195">
    <property type="entry name" value="aa-tRNA-synth_II"/>
</dbReference>
<dbReference type="InterPro" id="IPR045864">
    <property type="entry name" value="aa-tRNA-synth_II/BPL/LPL"/>
</dbReference>
<dbReference type="InterPro" id="IPR004618">
    <property type="entry name" value="AsnA"/>
</dbReference>
<dbReference type="NCBIfam" id="TIGR00669">
    <property type="entry name" value="asnA"/>
    <property type="match status" value="1"/>
</dbReference>
<dbReference type="PANTHER" id="PTHR30073">
    <property type="entry name" value="ASPARTATE--AMMONIA LIGASE"/>
    <property type="match status" value="1"/>
</dbReference>
<dbReference type="PANTHER" id="PTHR30073:SF5">
    <property type="entry name" value="ASPARTATE--AMMONIA LIGASE"/>
    <property type="match status" value="1"/>
</dbReference>
<dbReference type="Pfam" id="PF03590">
    <property type="entry name" value="AsnA"/>
    <property type="match status" value="1"/>
</dbReference>
<dbReference type="PIRSF" id="PIRSF001555">
    <property type="entry name" value="Asp_ammon_ligase"/>
    <property type="match status" value="1"/>
</dbReference>
<dbReference type="SUPFAM" id="SSF55681">
    <property type="entry name" value="Class II aaRS and biotin synthetases"/>
    <property type="match status" value="1"/>
</dbReference>
<dbReference type="PROSITE" id="PS50862">
    <property type="entry name" value="AA_TRNA_LIGASE_II"/>
    <property type="match status" value="1"/>
</dbReference>
<reference key="1">
    <citation type="journal article" date="1995" name="Science">
        <title>Whole-genome random sequencing and assembly of Haemophilus influenzae Rd.</title>
        <authorList>
            <person name="Fleischmann R.D."/>
            <person name="Adams M.D."/>
            <person name="White O."/>
            <person name="Clayton R.A."/>
            <person name="Kirkness E.F."/>
            <person name="Kerlavage A.R."/>
            <person name="Bult C.J."/>
            <person name="Tomb J.-F."/>
            <person name="Dougherty B.A."/>
            <person name="Merrick J.M."/>
            <person name="McKenney K."/>
            <person name="Sutton G.G."/>
            <person name="FitzHugh W."/>
            <person name="Fields C.A."/>
            <person name="Gocayne J.D."/>
            <person name="Scott J.D."/>
            <person name="Shirley R."/>
            <person name="Liu L.-I."/>
            <person name="Glodek A."/>
            <person name="Kelley J.M."/>
            <person name="Weidman J.F."/>
            <person name="Phillips C.A."/>
            <person name="Spriggs T."/>
            <person name="Hedblom E."/>
            <person name="Cotton M.D."/>
            <person name="Utterback T.R."/>
            <person name="Hanna M.C."/>
            <person name="Nguyen D.T."/>
            <person name="Saudek D.M."/>
            <person name="Brandon R.C."/>
            <person name="Fine L.D."/>
            <person name="Fritchman J.L."/>
            <person name="Fuhrmann J.L."/>
            <person name="Geoghagen N.S.M."/>
            <person name="Gnehm C.L."/>
            <person name="McDonald L.A."/>
            <person name="Small K.V."/>
            <person name="Fraser C.M."/>
            <person name="Smith H.O."/>
            <person name="Venter J.C."/>
        </authorList>
    </citation>
    <scope>NUCLEOTIDE SEQUENCE [LARGE SCALE GENOMIC DNA]</scope>
    <source>
        <strain>ATCC 51907 / DSM 11121 / KW20 / Rd</strain>
    </source>
</reference>
<proteinExistence type="inferred from homology"/>
<organism>
    <name type="scientific">Haemophilus influenzae (strain ATCC 51907 / DSM 11121 / KW20 / Rd)</name>
    <dbReference type="NCBI Taxonomy" id="71421"/>
    <lineage>
        <taxon>Bacteria</taxon>
        <taxon>Pseudomonadati</taxon>
        <taxon>Pseudomonadota</taxon>
        <taxon>Gammaproteobacteria</taxon>
        <taxon>Pasteurellales</taxon>
        <taxon>Pasteurellaceae</taxon>
        <taxon>Haemophilus</taxon>
    </lineage>
</organism>
<keyword id="KW-0028">Amino-acid biosynthesis</keyword>
<keyword id="KW-0061">Asparagine biosynthesis</keyword>
<keyword id="KW-0067">ATP-binding</keyword>
<keyword id="KW-0963">Cytoplasm</keyword>
<keyword id="KW-0436">Ligase</keyword>
<keyword id="KW-0547">Nucleotide-binding</keyword>
<keyword id="KW-1185">Reference proteome</keyword>
<comment type="catalytic activity">
    <reaction evidence="1">
        <text>L-aspartate + NH4(+) + ATP = L-asparagine + AMP + diphosphate + H(+)</text>
        <dbReference type="Rhea" id="RHEA:11372"/>
        <dbReference type="ChEBI" id="CHEBI:15378"/>
        <dbReference type="ChEBI" id="CHEBI:28938"/>
        <dbReference type="ChEBI" id="CHEBI:29991"/>
        <dbReference type="ChEBI" id="CHEBI:30616"/>
        <dbReference type="ChEBI" id="CHEBI:33019"/>
        <dbReference type="ChEBI" id="CHEBI:58048"/>
        <dbReference type="ChEBI" id="CHEBI:456215"/>
        <dbReference type="EC" id="6.3.1.1"/>
    </reaction>
</comment>
<comment type="pathway">
    <text evidence="1">Amino-acid biosynthesis; L-asparagine biosynthesis; L-asparagine from L-aspartate (ammonia route): step 1/1.</text>
</comment>
<comment type="subcellular location">
    <subcellularLocation>
        <location evidence="1">Cytoplasm</location>
    </subcellularLocation>
</comment>
<comment type="similarity">
    <text evidence="1">Belongs to the class-II aminoacyl-tRNA synthetase family. AsnA subfamily.</text>
</comment>